<sequence length="319" mass="35344">MSLNFLDFEQPIAELEAKIDSLTAVSRQDEKLDINIDEEVHRLREKSVELTRKIFADLGAWQVAQLARHPKRPYTLDYVRLAFDEFDELAGDRAYADDKAIVGGIARLEGRPVMIIGHQKGRETKEKIRRNFGMPAPEGYRKALRLMEMAERFNMPIITFIDTPGAYPGVGAEERGQSEAIARNLREMSRLNVPVICTVIGEGGSGGALAIGVGDKVNMLQYSTYSVISPEGCASILWKSADKAPLAAEAMGIIAPRLKELKLIDSIIPEPLGGAHRNPEAMAASLKAQLLEDLADLDVLSTDDLKNRRYQRLMSYGYA</sequence>
<proteinExistence type="inferred from homology"/>
<evidence type="ECO:0000255" key="1">
    <source>
        <dbReference type="HAMAP-Rule" id="MF_00823"/>
    </source>
</evidence>
<evidence type="ECO:0000255" key="2">
    <source>
        <dbReference type="PROSITE-ProRule" id="PRU01137"/>
    </source>
</evidence>
<reference key="1">
    <citation type="journal article" date="2009" name="PLoS ONE">
        <title>Salmonella paratyphi C: genetic divergence from Salmonella choleraesuis and pathogenic convergence with Salmonella typhi.</title>
        <authorList>
            <person name="Liu W.-Q."/>
            <person name="Feng Y."/>
            <person name="Wang Y."/>
            <person name="Zou Q.-H."/>
            <person name="Chen F."/>
            <person name="Guo J.-T."/>
            <person name="Peng Y.-H."/>
            <person name="Jin Y."/>
            <person name="Li Y.-G."/>
            <person name="Hu S.-N."/>
            <person name="Johnston R.N."/>
            <person name="Liu G.-R."/>
            <person name="Liu S.-L."/>
        </authorList>
    </citation>
    <scope>NUCLEOTIDE SEQUENCE [LARGE SCALE GENOMIC DNA]</scope>
    <source>
        <strain>RKS4594</strain>
    </source>
</reference>
<accession>C0Q6K8</accession>
<feature type="chain" id="PRO_1000148748" description="Acetyl-coenzyme A carboxylase carboxyl transferase subunit alpha">
    <location>
        <begin position="1"/>
        <end position="319"/>
    </location>
</feature>
<feature type="domain" description="CoA carboxyltransferase C-terminal" evidence="2">
    <location>
        <begin position="35"/>
        <end position="296"/>
    </location>
</feature>
<keyword id="KW-0067">ATP-binding</keyword>
<keyword id="KW-0963">Cytoplasm</keyword>
<keyword id="KW-0275">Fatty acid biosynthesis</keyword>
<keyword id="KW-0276">Fatty acid metabolism</keyword>
<keyword id="KW-0444">Lipid biosynthesis</keyword>
<keyword id="KW-0443">Lipid metabolism</keyword>
<keyword id="KW-0547">Nucleotide-binding</keyword>
<keyword id="KW-0808">Transferase</keyword>
<protein>
    <recommendedName>
        <fullName evidence="1">Acetyl-coenzyme A carboxylase carboxyl transferase subunit alpha</fullName>
        <shortName evidence="1">ACCase subunit alpha</shortName>
        <shortName evidence="1">Acetyl-CoA carboxylase carboxyltransferase subunit alpha</shortName>
        <ecNumber evidence="1">2.1.3.15</ecNumber>
    </recommendedName>
</protein>
<name>ACCA_SALPC</name>
<comment type="function">
    <text evidence="1">Component of the acetyl coenzyme A carboxylase (ACC) complex. First, biotin carboxylase catalyzes the carboxylation of biotin on its carrier protein (BCCP) and then the CO(2) group is transferred by the carboxyltransferase to acetyl-CoA to form malonyl-CoA.</text>
</comment>
<comment type="catalytic activity">
    <reaction evidence="1">
        <text>N(6)-carboxybiotinyl-L-lysyl-[protein] + acetyl-CoA = N(6)-biotinyl-L-lysyl-[protein] + malonyl-CoA</text>
        <dbReference type="Rhea" id="RHEA:54728"/>
        <dbReference type="Rhea" id="RHEA-COMP:10505"/>
        <dbReference type="Rhea" id="RHEA-COMP:10506"/>
        <dbReference type="ChEBI" id="CHEBI:57288"/>
        <dbReference type="ChEBI" id="CHEBI:57384"/>
        <dbReference type="ChEBI" id="CHEBI:83144"/>
        <dbReference type="ChEBI" id="CHEBI:83145"/>
        <dbReference type="EC" id="2.1.3.15"/>
    </reaction>
</comment>
<comment type="pathway">
    <text evidence="1">Lipid metabolism; malonyl-CoA biosynthesis; malonyl-CoA from acetyl-CoA: step 1/1.</text>
</comment>
<comment type="subunit">
    <text evidence="1">Acetyl-CoA carboxylase is a heterohexamer composed of biotin carboxyl carrier protein (AccB), biotin carboxylase (AccC) and two subunits each of ACCase subunit alpha (AccA) and ACCase subunit beta (AccD).</text>
</comment>
<comment type="subcellular location">
    <subcellularLocation>
        <location evidence="1">Cytoplasm</location>
    </subcellularLocation>
</comment>
<comment type="similarity">
    <text evidence="1">Belongs to the AccA family.</text>
</comment>
<dbReference type="EC" id="2.1.3.15" evidence="1"/>
<dbReference type="EMBL" id="CP000857">
    <property type="protein sequence ID" value="ACN44437.1"/>
    <property type="molecule type" value="Genomic_DNA"/>
</dbReference>
<dbReference type="RefSeq" id="WP_000055752.1">
    <property type="nucleotide sequence ID" value="NC_012125.1"/>
</dbReference>
<dbReference type="SMR" id="C0Q6K8"/>
<dbReference type="KEGG" id="sei:SPC_0248"/>
<dbReference type="HOGENOM" id="CLU_015486_0_2_6"/>
<dbReference type="UniPathway" id="UPA00655">
    <property type="reaction ID" value="UER00711"/>
</dbReference>
<dbReference type="Proteomes" id="UP000001599">
    <property type="component" value="Chromosome"/>
</dbReference>
<dbReference type="GO" id="GO:0009317">
    <property type="term" value="C:acetyl-CoA carboxylase complex"/>
    <property type="evidence" value="ECO:0007669"/>
    <property type="project" value="InterPro"/>
</dbReference>
<dbReference type="GO" id="GO:0003989">
    <property type="term" value="F:acetyl-CoA carboxylase activity"/>
    <property type="evidence" value="ECO:0007669"/>
    <property type="project" value="InterPro"/>
</dbReference>
<dbReference type="GO" id="GO:0005524">
    <property type="term" value="F:ATP binding"/>
    <property type="evidence" value="ECO:0007669"/>
    <property type="project" value="UniProtKB-KW"/>
</dbReference>
<dbReference type="GO" id="GO:0016743">
    <property type="term" value="F:carboxyl- or carbamoyltransferase activity"/>
    <property type="evidence" value="ECO:0007669"/>
    <property type="project" value="UniProtKB-UniRule"/>
</dbReference>
<dbReference type="GO" id="GO:0006633">
    <property type="term" value="P:fatty acid biosynthetic process"/>
    <property type="evidence" value="ECO:0007669"/>
    <property type="project" value="UniProtKB-KW"/>
</dbReference>
<dbReference type="GO" id="GO:2001295">
    <property type="term" value="P:malonyl-CoA biosynthetic process"/>
    <property type="evidence" value="ECO:0007669"/>
    <property type="project" value="UniProtKB-UniRule"/>
</dbReference>
<dbReference type="FunFam" id="3.90.226.10:FF:000008">
    <property type="entry name" value="Acetyl-coenzyme A carboxylase carboxyl transferase subunit alpha"/>
    <property type="match status" value="1"/>
</dbReference>
<dbReference type="Gene3D" id="3.90.226.10">
    <property type="entry name" value="2-enoyl-CoA Hydratase, Chain A, domain 1"/>
    <property type="match status" value="1"/>
</dbReference>
<dbReference type="HAMAP" id="MF_00823">
    <property type="entry name" value="AcetylCoA_CT_alpha"/>
    <property type="match status" value="1"/>
</dbReference>
<dbReference type="InterPro" id="IPR001095">
    <property type="entry name" value="Acetyl_CoA_COase_a_su"/>
</dbReference>
<dbReference type="InterPro" id="IPR029045">
    <property type="entry name" value="ClpP/crotonase-like_dom_sf"/>
</dbReference>
<dbReference type="InterPro" id="IPR011763">
    <property type="entry name" value="COA_CT_C"/>
</dbReference>
<dbReference type="NCBIfam" id="TIGR00513">
    <property type="entry name" value="accA"/>
    <property type="match status" value="1"/>
</dbReference>
<dbReference type="NCBIfam" id="NF041504">
    <property type="entry name" value="AccA_sub"/>
    <property type="match status" value="1"/>
</dbReference>
<dbReference type="NCBIfam" id="NF004344">
    <property type="entry name" value="PRK05724.1"/>
    <property type="match status" value="1"/>
</dbReference>
<dbReference type="PANTHER" id="PTHR42853">
    <property type="entry name" value="ACETYL-COENZYME A CARBOXYLASE CARBOXYL TRANSFERASE SUBUNIT ALPHA"/>
    <property type="match status" value="1"/>
</dbReference>
<dbReference type="PANTHER" id="PTHR42853:SF3">
    <property type="entry name" value="ACETYL-COENZYME A CARBOXYLASE CARBOXYL TRANSFERASE SUBUNIT ALPHA, CHLOROPLASTIC"/>
    <property type="match status" value="1"/>
</dbReference>
<dbReference type="Pfam" id="PF03255">
    <property type="entry name" value="ACCA"/>
    <property type="match status" value="1"/>
</dbReference>
<dbReference type="PRINTS" id="PR01069">
    <property type="entry name" value="ACCCTRFRASEA"/>
</dbReference>
<dbReference type="SUPFAM" id="SSF52096">
    <property type="entry name" value="ClpP/crotonase"/>
    <property type="match status" value="1"/>
</dbReference>
<dbReference type="PROSITE" id="PS50989">
    <property type="entry name" value="COA_CT_CTER"/>
    <property type="match status" value="1"/>
</dbReference>
<organism>
    <name type="scientific">Salmonella paratyphi C (strain RKS4594)</name>
    <dbReference type="NCBI Taxonomy" id="476213"/>
    <lineage>
        <taxon>Bacteria</taxon>
        <taxon>Pseudomonadati</taxon>
        <taxon>Pseudomonadota</taxon>
        <taxon>Gammaproteobacteria</taxon>
        <taxon>Enterobacterales</taxon>
        <taxon>Enterobacteriaceae</taxon>
        <taxon>Salmonella</taxon>
    </lineage>
</organism>
<gene>
    <name evidence="1" type="primary">accA</name>
    <name type="ordered locus">SPC_0248</name>
</gene>